<feature type="chain" id="PRO_1000015869" description="Glutamyl-tRNA(Gln) amidotransferase subunit A">
    <location>
        <begin position="1"/>
        <end position="498"/>
    </location>
</feature>
<feature type="active site" description="Charge relay system" evidence="1">
    <location>
        <position position="85"/>
    </location>
</feature>
<feature type="active site" description="Charge relay system" evidence="1">
    <location>
        <position position="160"/>
    </location>
</feature>
<feature type="active site" description="Acyl-ester intermediate" evidence="1">
    <location>
        <position position="184"/>
    </location>
</feature>
<sequence length="498" mass="51546">MTDLIKLDAATLAAKIAAREVSATEVTQACLDQIAATDAEYHAFLHVAGDQALAAAATVDKAIHEATAAGERLPSPLAGVPLALKDVFTTTDMPTTCGSKILEGWTSPYDATVTAKLRAAGIPILGKTNMDEFAMGSSTENSAYGPTRNPWNVDCVPGGSGGGSAAALAAFQAPLAIGSDTGGSIRQPAALTATVGVKPTYGTVSRYGLIACASSLDQGGPCARTVLDTALLHQVIAGHDPRDSTSVNAAVPDVVGAARAGARGDLKGVRIGVVKQLRSGEGYQPGVLASFTAAVEQLTALGAEVSEVDCPHFDHSLAAYYLILPSEVSSNLAKFDGMRYGLRVGDDGTTSAEEVMAMTRAAGFGAEVKRRIMIGTYALSAGYYDAYYNQAQKVRTLIARDLDEAYRSVDVLVSPATPSTAFRLGEKVDDPLAMYLFDLCTLPLNLAGHCGMSVPSGLSADDNLPVGLQIMAPALADDRLYRVGAAYEAARGPLPTAL</sequence>
<evidence type="ECO:0000255" key="1">
    <source>
        <dbReference type="HAMAP-Rule" id="MF_00120"/>
    </source>
</evidence>
<protein>
    <recommendedName>
        <fullName evidence="1">Glutamyl-tRNA(Gln) amidotransferase subunit A</fullName>
        <shortName evidence="1">Glu-ADT subunit A</shortName>
        <ecNumber evidence="1">6.3.5.7</ecNumber>
    </recommendedName>
</protein>
<reference key="1">
    <citation type="submission" date="2006-12" db="EMBL/GenBank/DDBJ databases">
        <title>Complete sequence of Mycobacterium vanbaalenii PYR-1.</title>
        <authorList>
            <consortium name="US DOE Joint Genome Institute"/>
            <person name="Copeland A."/>
            <person name="Lucas S."/>
            <person name="Lapidus A."/>
            <person name="Barry K."/>
            <person name="Detter J.C."/>
            <person name="Glavina del Rio T."/>
            <person name="Hammon N."/>
            <person name="Israni S."/>
            <person name="Dalin E."/>
            <person name="Tice H."/>
            <person name="Pitluck S."/>
            <person name="Singan V."/>
            <person name="Schmutz J."/>
            <person name="Larimer F."/>
            <person name="Land M."/>
            <person name="Hauser L."/>
            <person name="Kyrpides N."/>
            <person name="Anderson I.J."/>
            <person name="Miller C."/>
            <person name="Richardson P."/>
        </authorList>
    </citation>
    <scope>NUCLEOTIDE SEQUENCE [LARGE SCALE GENOMIC DNA]</scope>
    <source>
        <strain>DSM 7251 / JCM 13017 / BCRC 16820 / KCTC 9966 / NRRL B-24157 / PYR-1</strain>
    </source>
</reference>
<organism>
    <name type="scientific">Mycolicibacterium vanbaalenii (strain DSM 7251 / JCM 13017 / BCRC 16820 / KCTC 9966 / NRRL B-24157 / PYR-1)</name>
    <name type="common">Mycobacterium vanbaalenii</name>
    <dbReference type="NCBI Taxonomy" id="350058"/>
    <lineage>
        <taxon>Bacteria</taxon>
        <taxon>Bacillati</taxon>
        <taxon>Actinomycetota</taxon>
        <taxon>Actinomycetes</taxon>
        <taxon>Mycobacteriales</taxon>
        <taxon>Mycobacteriaceae</taxon>
        <taxon>Mycolicibacterium</taxon>
    </lineage>
</organism>
<accession>A1T6Y0</accession>
<proteinExistence type="inferred from homology"/>
<dbReference type="EC" id="6.3.5.7" evidence="1"/>
<dbReference type="EMBL" id="CP000511">
    <property type="protein sequence ID" value="ABM12930.1"/>
    <property type="molecule type" value="Genomic_DNA"/>
</dbReference>
<dbReference type="RefSeq" id="WP_011779344.1">
    <property type="nucleotide sequence ID" value="NZ_JACKSD010000243.1"/>
</dbReference>
<dbReference type="SMR" id="A1T6Y0"/>
<dbReference type="STRING" id="350058.Mvan_2115"/>
<dbReference type="KEGG" id="mva:Mvan_2115"/>
<dbReference type="eggNOG" id="COG0154">
    <property type="taxonomic scope" value="Bacteria"/>
</dbReference>
<dbReference type="HOGENOM" id="CLU_009600_0_3_11"/>
<dbReference type="Proteomes" id="UP000009159">
    <property type="component" value="Chromosome"/>
</dbReference>
<dbReference type="GO" id="GO:0030956">
    <property type="term" value="C:glutamyl-tRNA(Gln) amidotransferase complex"/>
    <property type="evidence" value="ECO:0007669"/>
    <property type="project" value="InterPro"/>
</dbReference>
<dbReference type="GO" id="GO:0005524">
    <property type="term" value="F:ATP binding"/>
    <property type="evidence" value="ECO:0007669"/>
    <property type="project" value="UniProtKB-KW"/>
</dbReference>
<dbReference type="GO" id="GO:0050567">
    <property type="term" value="F:glutaminyl-tRNA synthase (glutamine-hydrolyzing) activity"/>
    <property type="evidence" value="ECO:0007669"/>
    <property type="project" value="UniProtKB-UniRule"/>
</dbReference>
<dbReference type="GO" id="GO:0006412">
    <property type="term" value="P:translation"/>
    <property type="evidence" value="ECO:0007669"/>
    <property type="project" value="UniProtKB-UniRule"/>
</dbReference>
<dbReference type="Gene3D" id="3.90.1300.10">
    <property type="entry name" value="Amidase signature (AS) domain"/>
    <property type="match status" value="1"/>
</dbReference>
<dbReference type="HAMAP" id="MF_00120">
    <property type="entry name" value="GatA"/>
    <property type="match status" value="1"/>
</dbReference>
<dbReference type="InterPro" id="IPR000120">
    <property type="entry name" value="Amidase"/>
</dbReference>
<dbReference type="InterPro" id="IPR020556">
    <property type="entry name" value="Amidase_CS"/>
</dbReference>
<dbReference type="InterPro" id="IPR023631">
    <property type="entry name" value="Amidase_dom"/>
</dbReference>
<dbReference type="InterPro" id="IPR036928">
    <property type="entry name" value="AS_sf"/>
</dbReference>
<dbReference type="InterPro" id="IPR004412">
    <property type="entry name" value="GatA"/>
</dbReference>
<dbReference type="NCBIfam" id="TIGR00132">
    <property type="entry name" value="gatA"/>
    <property type="match status" value="1"/>
</dbReference>
<dbReference type="PANTHER" id="PTHR11895:SF151">
    <property type="entry name" value="GLUTAMYL-TRNA(GLN) AMIDOTRANSFERASE SUBUNIT A"/>
    <property type="match status" value="1"/>
</dbReference>
<dbReference type="PANTHER" id="PTHR11895">
    <property type="entry name" value="TRANSAMIDASE"/>
    <property type="match status" value="1"/>
</dbReference>
<dbReference type="Pfam" id="PF01425">
    <property type="entry name" value="Amidase"/>
    <property type="match status" value="1"/>
</dbReference>
<dbReference type="SUPFAM" id="SSF75304">
    <property type="entry name" value="Amidase signature (AS) enzymes"/>
    <property type="match status" value="1"/>
</dbReference>
<dbReference type="PROSITE" id="PS00571">
    <property type="entry name" value="AMIDASES"/>
    <property type="match status" value="1"/>
</dbReference>
<gene>
    <name evidence="1" type="primary">gatA</name>
    <name type="ordered locus">Mvan_2115</name>
</gene>
<keyword id="KW-0067">ATP-binding</keyword>
<keyword id="KW-0436">Ligase</keyword>
<keyword id="KW-0547">Nucleotide-binding</keyword>
<keyword id="KW-0648">Protein biosynthesis</keyword>
<name>GATA_MYCVP</name>
<comment type="function">
    <text evidence="1">Allows the formation of correctly charged Gln-tRNA(Gln) through the transamidation of misacylated Glu-tRNA(Gln) in organisms which lack glutaminyl-tRNA synthetase. The reaction takes place in the presence of glutamine and ATP through an activated gamma-phospho-Glu-tRNA(Gln).</text>
</comment>
<comment type="catalytic activity">
    <reaction evidence="1">
        <text>L-glutamyl-tRNA(Gln) + L-glutamine + ATP + H2O = L-glutaminyl-tRNA(Gln) + L-glutamate + ADP + phosphate + H(+)</text>
        <dbReference type="Rhea" id="RHEA:17521"/>
        <dbReference type="Rhea" id="RHEA-COMP:9681"/>
        <dbReference type="Rhea" id="RHEA-COMP:9684"/>
        <dbReference type="ChEBI" id="CHEBI:15377"/>
        <dbReference type="ChEBI" id="CHEBI:15378"/>
        <dbReference type="ChEBI" id="CHEBI:29985"/>
        <dbReference type="ChEBI" id="CHEBI:30616"/>
        <dbReference type="ChEBI" id="CHEBI:43474"/>
        <dbReference type="ChEBI" id="CHEBI:58359"/>
        <dbReference type="ChEBI" id="CHEBI:78520"/>
        <dbReference type="ChEBI" id="CHEBI:78521"/>
        <dbReference type="ChEBI" id="CHEBI:456216"/>
        <dbReference type="EC" id="6.3.5.7"/>
    </reaction>
</comment>
<comment type="subunit">
    <text evidence="1">Heterotrimer of A, B and C subunits.</text>
</comment>
<comment type="similarity">
    <text evidence="1">Belongs to the amidase family. GatA subfamily.</text>
</comment>